<dbReference type="EMBL" id="BA000034">
    <property type="protein sequence ID" value="BAC64909.1"/>
    <property type="molecule type" value="Genomic_DNA"/>
</dbReference>
<dbReference type="RefSeq" id="WP_000290414.1">
    <property type="nucleotide sequence ID" value="NC_004606.1"/>
</dbReference>
<dbReference type="SMR" id="P0DE41"/>
<dbReference type="GeneID" id="83689722"/>
<dbReference type="KEGG" id="sps:SPs1814"/>
<dbReference type="HOGENOM" id="CLU_129084_2_3_9"/>
<dbReference type="GO" id="GO:0015934">
    <property type="term" value="C:large ribosomal subunit"/>
    <property type="evidence" value="ECO:0007669"/>
    <property type="project" value="InterPro"/>
</dbReference>
<dbReference type="GO" id="GO:0003735">
    <property type="term" value="F:structural constituent of ribosome"/>
    <property type="evidence" value="ECO:0007669"/>
    <property type="project" value="InterPro"/>
</dbReference>
<dbReference type="GO" id="GO:0006412">
    <property type="term" value="P:translation"/>
    <property type="evidence" value="ECO:0007669"/>
    <property type="project" value="UniProtKB-UniRule"/>
</dbReference>
<dbReference type="HAMAP" id="MF_00340">
    <property type="entry name" value="Ribosomal_bL32"/>
    <property type="match status" value="1"/>
</dbReference>
<dbReference type="InterPro" id="IPR002677">
    <property type="entry name" value="Ribosomal_bL32"/>
</dbReference>
<dbReference type="InterPro" id="IPR044957">
    <property type="entry name" value="Ribosomal_bL32_bact"/>
</dbReference>
<dbReference type="InterPro" id="IPR011332">
    <property type="entry name" value="Ribosomal_zn-bd"/>
</dbReference>
<dbReference type="NCBIfam" id="TIGR01031">
    <property type="entry name" value="rpmF_bact"/>
    <property type="match status" value="1"/>
</dbReference>
<dbReference type="PANTHER" id="PTHR35534">
    <property type="entry name" value="50S RIBOSOMAL PROTEIN L32"/>
    <property type="match status" value="1"/>
</dbReference>
<dbReference type="PANTHER" id="PTHR35534:SF1">
    <property type="entry name" value="LARGE RIBOSOMAL SUBUNIT PROTEIN BL32"/>
    <property type="match status" value="1"/>
</dbReference>
<dbReference type="Pfam" id="PF01783">
    <property type="entry name" value="Ribosomal_L32p"/>
    <property type="match status" value="1"/>
</dbReference>
<dbReference type="SUPFAM" id="SSF57829">
    <property type="entry name" value="Zn-binding ribosomal proteins"/>
    <property type="match status" value="1"/>
</dbReference>
<organism>
    <name type="scientific">Streptococcus pyogenes serotype M3 (strain SSI-1)</name>
    <dbReference type="NCBI Taxonomy" id="193567"/>
    <lineage>
        <taxon>Bacteria</taxon>
        <taxon>Bacillati</taxon>
        <taxon>Bacillota</taxon>
        <taxon>Bacilli</taxon>
        <taxon>Lactobacillales</taxon>
        <taxon>Streptococcaceae</taxon>
        <taxon>Streptococcus</taxon>
    </lineage>
</organism>
<feature type="chain" id="PRO_0000411510" description="Large ribosomal subunit protein bL32">
    <location>
        <begin position="1"/>
        <end position="60"/>
    </location>
</feature>
<feature type="region of interest" description="Disordered" evidence="2">
    <location>
        <begin position="1"/>
        <end position="22"/>
    </location>
</feature>
<feature type="compositionally biased region" description="Basic residues" evidence="2">
    <location>
        <begin position="7"/>
        <end position="20"/>
    </location>
</feature>
<accession>P0DE41</accession>
<accession>P66212</accession>
<accession>Q8NZ17</accession>
<evidence type="ECO:0000255" key="1">
    <source>
        <dbReference type="HAMAP-Rule" id="MF_00340"/>
    </source>
</evidence>
<evidence type="ECO:0000256" key="2">
    <source>
        <dbReference type="SAM" id="MobiDB-lite"/>
    </source>
</evidence>
<evidence type="ECO:0000305" key="3"/>
<gene>
    <name evidence="1" type="primary">rpmF</name>
    <name type="ordered locus">SPs1814</name>
</gene>
<comment type="similarity">
    <text evidence="1">Belongs to the bacterial ribosomal protein bL32 family.</text>
</comment>
<reference key="1">
    <citation type="journal article" date="2003" name="Genome Res.">
        <title>Genome sequence of an M3 strain of Streptococcus pyogenes reveals a large-scale genomic rearrangement in invasive strains and new insights into phage evolution.</title>
        <authorList>
            <person name="Nakagawa I."/>
            <person name="Kurokawa K."/>
            <person name="Yamashita A."/>
            <person name="Nakata M."/>
            <person name="Tomiyasu Y."/>
            <person name="Okahashi N."/>
            <person name="Kawabata S."/>
            <person name="Yamazaki K."/>
            <person name="Shiba T."/>
            <person name="Yasunaga T."/>
            <person name="Hayashi H."/>
            <person name="Hattori M."/>
            <person name="Hamada S."/>
        </authorList>
    </citation>
    <scope>NUCLEOTIDE SEQUENCE [LARGE SCALE GENOMIC DNA]</scope>
    <source>
        <strain>SSI-1</strain>
    </source>
</reference>
<proteinExistence type="inferred from homology"/>
<protein>
    <recommendedName>
        <fullName evidence="1">Large ribosomal subunit protein bL32</fullName>
    </recommendedName>
    <alternativeName>
        <fullName evidence="3">50S ribosomal protein L32</fullName>
    </alternativeName>
</protein>
<sequence length="60" mass="6865">MAVPARHTSKAKKNKRRTHYKLTAPSVQFDETTGDYSRSHRVSLKGYYKGRKIAKANEAK</sequence>
<keyword id="KW-0687">Ribonucleoprotein</keyword>
<keyword id="KW-0689">Ribosomal protein</keyword>
<name>RL32_STRPQ</name>